<protein>
    <recommendedName>
        <fullName evidence="6">Ferric enterobactin transport system permease protein FepD</fullName>
    </recommendedName>
</protein>
<comment type="function">
    <text evidence="2 4 6">Part of the ABC transporter complex FepBDGC involved in ferric enterobactin uptake (PubMed:1479347, PubMed:1838574). Responsible for the translocation of the substrate across the membrane (Probable).</text>
</comment>
<comment type="subunit">
    <text evidence="7">The complex is composed of two ATP-binding proteins (FepC), two transmembrane proteins (FepD and FepG) and a solute-binding protein (FepB).</text>
</comment>
<comment type="subcellular location">
    <subcellularLocation>
        <location evidence="2 3">Cell inner membrane</location>
        <topology evidence="1">Multi-pass membrane protein</topology>
    </subcellularLocation>
</comment>
<comment type="induction">
    <text evidence="4 5">Controlled in part by the amount of available iron (PubMed:1838574). Induced by hydroxyurea (PubMed:20005847).</text>
</comment>
<comment type="similarity">
    <text evidence="6">Belongs to the binding-protein-dependent transport system permease family. FecCD subfamily.</text>
</comment>
<comment type="sequence caution" evidence="6">
    <conflict type="erroneous initiation">
        <sequence resource="EMBL-CDS" id="AAB40789"/>
    </conflict>
    <text>Extended N-terminus.</text>
</comment>
<accession>P23876</accession>
<accession>P77097</accession>
<accession>Q2MBL1</accession>
<gene>
    <name type="primary">fepD</name>
    <name type="ordered locus">b0590</name>
    <name type="ordered locus">JW0582</name>
</gene>
<feature type="chain" id="PRO_0000060022" description="Ferric enterobactin transport system permease protein FepD">
    <location>
        <begin position="1"/>
        <end position="334"/>
    </location>
</feature>
<feature type="topological domain" description="Periplasmic" evidence="1">
    <location>
        <begin position="1"/>
        <end position="9"/>
    </location>
</feature>
<feature type="transmembrane region" description="Helical" evidence="1">
    <location>
        <begin position="10"/>
        <end position="30"/>
    </location>
</feature>
<feature type="topological domain" description="Cytoplasmic" evidence="1">
    <location>
        <begin position="31"/>
        <end position="63"/>
    </location>
</feature>
<feature type="transmembrane region" description="Helical" evidence="1">
    <location>
        <begin position="64"/>
        <end position="84"/>
    </location>
</feature>
<feature type="topological domain" description="Periplasmic" evidence="1">
    <location>
        <begin position="85"/>
        <end position="92"/>
    </location>
</feature>
<feature type="transmembrane region" description="Helical" evidence="1">
    <location>
        <begin position="93"/>
        <end position="113"/>
    </location>
</feature>
<feature type="topological domain" description="Cytoplasmic" evidence="1">
    <location>
        <begin position="114"/>
        <end position="120"/>
    </location>
</feature>
<feature type="transmembrane region" description="Helical" evidence="1">
    <location>
        <begin position="121"/>
        <end position="141"/>
    </location>
</feature>
<feature type="topological domain" description="Periplasmic" evidence="1">
    <location>
        <begin position="142"/>
        <end position="151"/>
    </location>
</feature>
<feature type="transmembrane region" description="Helical" evidence="1">
    <location>
        <begin position="152"/>
        <end position="172"/>
    </location>
</feature>
<feature type="topological domain" description="Cytoplasmic" evidence="1">
    <location>
        <begin position="173"/>
        <end position="192"/>
    </location>
</feature>
<feature type="transmembrane region" description="Helical" evidence="1">
    <location>
        <begin position="193"/>
        <end position="213"/>
    </location>
</feature>
<feature type="topological domain" description="Periplasmic" evidence="1">
    <location>
        <begin position="214"/>
        <end position="241"/>
    </location>
</feature>
<feature type="transmembrane region" description="Helical" evidence="1">
    <location>
        <begin position="242"/>
        <end position="262"/>
    </location>
</feature>
<feature type="topological domain" description="Cytoplasmic" evidence="1">
    <location>
        <begin position="263"/>
        <end position="279"/>
    </location>
</feature>
<feature type="transmembrane region" description="Helical" evidence="1">
    <location>
        <begin position="280"/>
        <end position="300"/>
    </location>
</feature>
<feature type="topological domain" description="Periplasmic" evidence="1">
    <location>
        <begin position="301"/>
        <end position="305"/>
    </location>
</feature>
<feature type="transmembrane region" description="Helical" evidence="1">
    <location>
        <begin position="306"/>
        <end position="326"/>
    </location>
</feature>
<feature type="topological domain" description="Cytoplasmic" evidence="3">
    <location>
        <begin position="327"/>
        <end position="334"/>
    </location>
</feature>
<feature type="sequence conflict" description="In Ref. 2; CAA42043." evidence="6" ref="2">
    <original>RV</original>
    <variation>AL</variation>
    <location>
        <begin position="233"/>
        <end position="234"/>
    </location>
</feature>
<name>FEPD_ECOLI</name>
<sequence>MSGSVAVTRAIAVPGLLLLLIIATALSLLIGAKSLPASVVLEAFSGTCQSADCTIVLDARLPRTLAGLLAGGALGLAGALMQTLTRNPLADPGLLGVNAGASFAIVLGAALFGYSSAQEQLAMAFAGALVASLIVAFTGSQGGGQLSPVRLTLAGVALAAVLEGLTSGIALLNPDVYDQLRFWQAGSLDIRNLHTLKVVLIPVLIAGATALLLSRALNSLSLGSDTATALGSRVARTQLIGLLAITVLCGSATAIVGPIAFIGLMMPHMARWLVGADHRWSLPVTLLATPALLLFADIIGRVIVPGELRVSVVSAFIGAPVLIFLVRRKTRGGA</sequence>
<evidence type="ECO:0000255" key="1"/>
<evidence type="ECO:0000269" key="2">
    <source>
    </source>
</evidence>
<evidence type="ECO:0000269" key="3">
    <source>
    </source>
</evidence>
<evidence type="ECO:0000269" key="4">
    <source>
    </source>
</evidence>
<evidence type="ECO:0000269" key="5">
    <source>
    </source>
</evidence>
<evidence type="ECO:0000305" key="6"/>
<evidence type="ECO:0000305" key="7">
    <source>
    </source>
</evidence>
<reference key="1">
    <citation type="journal article" date="1991" name="Mol. Microbiol.">
        <title>Nucleotide sequence and genetic organization of the ferric enterobactin transport system: homology to other periplasmic binding protein-dependent systems in Escherichia coli.</title>
        <authorList>
            <person name="Shea C.M."/>
            <person name="McIntosh M.A."/>
        </authorList>
    </citation>
    <scope>NUCLEOTIDE SEQUENCE [GENOMIC DNA]</scope>
    <scope>FUNCTION</scope>
    <scope>INDUCTION</scope>
    <source>
        <strain>K12</strain>
    </source>
</reference>
<reference key="2">
    <citation type="journal article" date="1991" name="Mol. Microbiol.">
        <title>Organization of genes encoding membrane proteins of the Escherichia coli ferrienterobactin permease.</title>
        <authorList>
            <person name="Chenault S.S."/>
            <person name="Earhart C.F."/>
        </authorList>
    </citation>
    <scope>NUCLEOTIDE SEQUENCE [GENOMIC DNA]</scope>
    <source>
        <strain>K12</strain>
    </source>
</reference>
<reference key="3">
    <citation type="submission" date="1997-01" db="EMBL/GenBank/DDBJ databases">
        <title>Sequence of minutes 4-25 of Escherichia coli.</title>
        <authorList>
            <person name="Chung E."/>
            <person name="Allen E."/>
            <person name="Araujo R."/>
            <person name="Aparicio A.M."/>
            <person name="Davis K."/>
            <person name="Duncan M."/>
            <person name="Federspiel N."/>
            <person name="Hyman R."/>
            <person name="Kalman S."/>
            <person name="Komp C."/>
            <person name="Kurdi O."/>
            <person name="Lew H."/>
            <person name="Lin D."/>
            <person name="Namath A."/>
            <person name="Oefner P."/>
            <person name="Roberts D."/>
            <person name="Schramm S."/>
            <person name="Davis R.W."/>
        </authorList>
    </citation>
    <scope>NUCLEOTIDE SEQUENCE [LARGE SCALE GENOMIC DNA]</scope>
    <source>
        <strain>K12 / MG1655 / ATCC 47076</strain>
    </source>
</reference>
<reference key="4">
    <citation type="journal article" date="1997" name="Science">
        <title>The complete genome sequence of Escherichia coli K-12.</title>
        <authorList>
            <person name="Blattner F.R."/>
            <person name="Plunkett G. III"/>
            <person name="Bloch C.A."/>
            <person name="Perna N.T."/>
            <person name="Burland V."/>
            <person name="Riley M."/>
            <person name="Collado-Vides J."/>
            <person name="Glasner J.D."/>
            <person name="Rode C.K."/>
            <person name="Mayhew G.F."/>
            <person name="Gregor J."/>
            <person name="Davis N.W."/>
            <person name="Kirkpatrick H.A."/>
            <person name="Goeden M.A."/>
            <person name="Rose D.J."/>
            <person name="Mau B."/>
            <person name="Shao Y."/>
        </authorList>
    </citation>
    <scope>NUCLEOTIDE SEQUENCE [LARGE SCALE GENOMIC DNA]</scope>
    <source>
        <strain>K12 / MG1655 / ATCC 47076</strain>
    </source>
</reference>
<reference key="5">
    <citation type="journal article" date="2006" name="Mol. Syst. Biol.">
        <title>Highly accurate genome sequences of Escherichia coli K-12 strains MG1655 and W3110.</title>
        <authorList>
            <person name="Hayashi K."/>
            <person name="Morooka N."/>
            <person name="Yamamoto Y."/>
            <person name="Fujita K."/>
            <person name="Isono K."/>
            <person name="Choi S."/>
            <person name="Ohtsubo E."/>
            <person name="Baba T."/>
            <person name="Wanner B.L."/>
            <person name="Mori H."/>
            <person name="Horiuchi T."/>
        </authorList>
    </citation>
    <scope>NUCLEOTIDE SEQUENCE [LARGE SCALE GENOMIC DNA]</scope>
    <source>
        <strain>K12 / W3110 / ATCC 27325 / DSM 5911</strain>
    </source>
</reference>
<reference key="6">
    <citation type="journal article" date="1992" name="J. Gen. Microbiol.">
        <title>Identification of hydrophobic proteins FepD and FepG of the Escherichia coli ferrienterobactin permease.</title>
        <authorList>
            <person name="Chenault S.S."/>
            <person name="Earhart C.F."/>
        </authorList>
    </citation>
    <scope>FUNCTION</scope>
    <scope>SUBUNIT</scope>
    <scope>SUBCELLULAR LOCATION</scope>
</reference>
<reference key="7">
    <citation type="journal article" date="2005" name="Science">
        <title>Global topology analysis of the Escherichia coli inner membrane proteome.</title>
        <authorList>
            <person name="Daley D.O."/>
            <person name="Rapp M."/>
            <person name="Granseth E."/>
            <person name="Melen K."/>
            <person name="Drew D."/>
            <person name="von Heijne G."/>
        </authorList>
    </citation>
    <scope>TOPOLOGY [LARGE SCALE ANALYSIS]</scope>
    <scope>SUBCELLULAR LOCATION</scope>
    <source>
        <strain>K12 / MG1655 / ATCC 47076</strain>
    </source>
</reference>
<reference key="8">
    <citation type="journal article" date="2009" name="Mol. Cell">
        <title>Hydroxyurea induces hydroxyl radical-mediated cell death in Escherichia coli.</title>
        <authorList>
            <person name="Davies B.W."/>
            <person name="Kohanski M.A."/>
            <person name="Simmons L.A."/>
            <person name="Winkler J.A."/>
            <person name="Collins J.J."/>
            <person name="Walker G.C."/>
        </authorList>
    </citation>
    <scope>INDUCTION BY HYDROXYUREA</scope>
    <source>
        <strain>K12 / MC4100 / ATCC 35695 / DSM 6574</strain>
    </source>
</reference>
<dbReference type="EMBL" id="X57471">
    <property type="protein sequence ID" value="CAA40707.1"/>
    <property type="molecule type" value="Genomic_DNA"/>
</dbReference>
<dbReference type="EMBL" id="X59402">
    <property type="protein sequence ID" value="CAA42043.1"/>
    <property type="molecule type" value="Genomic_DNA"/>
</dbReference>
<dbReference type="EMBL" id="U82598">
    <property type="protein sequence ID" value="AAB40789.1"/>
    <property type="status" value="ALT_INIT"/>
    <property type="molecule type" value="Genomic_DNA"/>
</dbReference>
<dbReference type="EMBL" id="U00096">
    <property type="protein sequence ID" value="AAC73691.1"/>
    <property type="molecule type" value="Genomic_DNA"/>
</dbReference>
<dbReference type="EMBL" id="AP009048">
    <property type="protein sequence ID" value="BAE76345.1"/>
    <property type="molecule type" value="Genomic_DNA"/>
</dbReference>
<dbReference type="PIR" id="S16296">
    <property type="entry name" value="S16296"/>
</dbReference>
<dbReference type="RefSeq" id="NP_415122.1">
    <property type="nucleotide sequence ID" value="NC_000913.3"/>
</dbReference>
<dbReference type="RefSeq" id="WP_000016947.1">
    <property type="nucleotide sequence ID" value="NZ_SSZK01000032.1"/>
</dbReference>
<dbReference type="SMR" id="P23876"/>
<dbReference type="BioGRID" id="4261558">
    <property type="interactions" value="236"/>
</dbReference>
<dbReference type="ComplexPortal" id="CPX-4404">
    <property type="entry name" value="Ferric-enterobactin ABC transporter complex"/>
</dbReference>
<dbReference type="FunCoup" id="P23876">
    <property type="interactions" value="263"/>
</dbReference>
<dbReference type="STRING" id="511145.b0590"/>
<dbReference type="TCDB" id="3.A.1.14.2">
    <property type="family name" value="the atp-binding cassette (abc) superfamily"/>
</dbReference>
<dbReference type="PaxDb" id="511145-b0590"/>
<dbReference type="EnsemblBacteria" id="AAC73691">
    <property type="protein sequence ID" value="AAC73691"/>
    <property type="gene ID" value="b0590"/>
</dbReference>
<dbReference type="GeneID" id="945214"/>
<dbReference type="KEGG" id="ecj:JW0582"/>
<dbReference type="KEGG" id="eco:b0590"/>
<dbReference type="KEGG" id="ecoc:C3026_02945"/>
<dbReference type="PATRIC" id="fig|1411691.4.peg.1679"/>
<dbReference type="EchoBASE" id="EB0292"/>
<dbReference type="eggNOG" id="COG0609">
    <property type="taxonomic scope" value="Bacteria"/>
</dbReference>
<dbReference type="HOGENOM" id="CLU_013016_1_0_6"/>
<dbReference type="InParanoid" id="P23876"/>
<dbReference type="OMA" id="WFLGGSR"/>
<dbReference type="OrthoDB" id="9055647at2"/>
<dbReference type="PhylomeDB" id="P23876"/>
<dbReference type="BioCyc" id="EcoCyc:FEPD-MONOMER"/>
<dbReference type="BioCyc" id="MetaCyc:FEPD-MONOMER"/>
<dbReference type="PRO" id="PR:P23876"/>
<dbReference type="Proteomes" id="UP000000625">
    <property type="component" value="Chromosome"/>
</dbReference>
<dbReference type="GO" id="GO:0055052">
    <property type="term" value="C:ATP-binding cassette (ABC) transporter complex, substrate-binding subunit-containing"/>
    <property type="evidence" value="ECO:0000303"/>
    <property type="project" value="ComplexPortal"/>
</dbReference>
<dbReference type="GO" id="GO:0016020">
    <property type="term" value="C:membrane"/>
    <property type="evidence" value="ECO:0000303"/>
    <property type="project" value="ComplexPortal"/>
</dbReference>
<dbReference type="GO" id="GO:0005886">
    <property type="term" value="C:plasma membrane"/>
    <property type="evidence" value="ECO:0000314"/>
    <property type="project" value="EcoCyc"/>
</dbReference>
<dbReference type="GO" id="GO:0015620">
    <property type="term" value="F:ferric-enterobactin transmembrane transporter activity"/>
    <property type="evidence" value="ECO:0000315"/>
    <property type="project" value="EcoCyc"/>
</dbReference>
<dbReference type="GO" id="GO:0022857">
    <property type="term" value="F:transmembrane transporter activity"/>
    <property type="evidence" value="ECO:0000318"/>
    <property type="project" value="GO_Central"/>
</dbReference>
<dbReference type="GO" id="GO:0015685">
    <property type="term" value="P:ferric-enterobactin import into cell"/>
    <property type="evidence" value="ECO:0000315"/>
    <property type="project" value="EcoCyc"/>
</dbReference>
<dbReference type="GO" id="GO:0033212">
    <property type="term" value="P:iron import into cell"/>
    <property type="evidence" value="ECO:0000303"/>
    <property type="project" value="ComplexPortal"/>
</dbReference>
<dbReference type="GO" id="GO:0033214">
    <property type="term" value="P:siderophore-dependent iron import into cell"/>
    <property type="evidence" value="ECO:0000318"/>
    <property type="project" value="GO_Central"/>
</dbReference>
<dbReference type="CDD" id="cd06550">
    <property type="entry name" value="TM_ABC_iron-siderophores_like"/>
    <property type="match status" value="1"/>
</dbReference>
<dbReference type="FunFam" id="1.10.3470.10:FF:000001">
    <property type="entry name" value="Vitamin B12 ABC transporter permease BtuC"/>
    <property type="match status" value="1"/>
</dbReference>
<dbReference type="Gene3D" id="1.10.3470.10">
    <property type="entry name" value="ABC transporter involved in vitamin B12 uptake, BtuC"/>
    <property type="match status" value="1"/>
</dbReference>
<dbReference type="InterPro" id="IPR037294">
    <property type="entry name" value="ABC_BtuC-like"/>
</dbReference>
<dbReference type="InterPro" id="IPR000522">
    <property type="entry name" value="ABC_transptr_permease_BtuC"/>
</dbReference>
<dbReference type="NCBIfam" id="NF007760">
    <property type="entry name" value="PRK10441.1"/>
    <property type="match status" value="1"/>
</dbReference>
<dbReference type="PANTHER" id="PTHR30472:SF1">
    <property type="entry name" value="FE(3+) DICITRATE TRANSPORT SYSTEM PERMEASE PROTEIN FECC-RELATED"/>
    <property type="match status" value="1"/>
</dbReference>
<dbReference type="PANTHER" id="PTHR30472">
    <property type="entry name" value="FERRIC ENTEROBACTIN TRANSPORT SYSTEM PERMEASE PROTEIN"/>
    <property type="match status" value="1"/>
</dbReference>
<dbReference type="Pfam" id="PF01032">
    <property type="entry name" value="FecCD"/>
    <property type="match status" value="1"/>
</dbReference>
<dbReference type="SUPFAM" id="SSF81345">
    <property type="entry name" value="ABC transporter involved in vitamin B12 uptake, BtuC"/>
    <property type="match status" value="1"/>
</dbReference>
<organism>
    <name type="scientific">Escherichia coli (strain K12)</name>
    <dbReference type="NCBI Taxonomy" id="83333"/>
    <lineage>
        <taxon>Bacteria</taxon>
        <taxon>Pseudomonadati</taxon>
        <taxon>Pseudomonadota</taxon>
        <taxon>Gammaproteobacteria</taxon>
        <taxon>Enterobacterales</taxon>
        <taxon>Enterobacteriaceae</taxon>
        <taxon>Escherichia</taxon>
    </lineage>
</organism>
<keyword id="KW-0997">Cell inner membrane</keyword>
<keyword id="KW-1003">Cell membrane</keyword>
<keyword id="KW-0406">Ion transport</keyword>
<keyword id="KW-0408">Iron</keyword>
<keyword id="KW-0410">Iron transport</keyword>
<keyword id="KW-0472">Membrane</keyword>
<keyword id="KW-1185">Reference proteome</keyword>
<keyword id="KW-0812">Transmembrane</keyword>
<keyword id="KW-1133">Transmembrane helix</keyword>
<keyword id="KW-0813">Transport</keyword>
<proteinExistence type="evidence at protein level"/>